<comment type="function">
    <text evidence="1 4">Critical regulator of mitochondrial DNA (mtDNA) abundance (PubMed:37676315). Binds dsDNA throughout the mitochondrial genome without sequence specificity and controls mtDNA copy number by promoting its replication (By similarity). Also plays important roles in mitochondrial metabolism and cell proliferation (By similarity).</text>
</comment>
<comment type="subcellular location">
    <subcellularLocation>
        <location evidence="1">Mitochondrion inner membrane</location>
        <topology evidence="1">Single-pass type I membrane protein</topology>
    </subcellularLocation>
    <subcellularLocation>
        <location evidence="4">Mitochondrion matrix</location>
        <location evidence="4">Mitochondrion nucleoid</location>
    </subcellularLocation>
    <text evidence="1">Retained in nucleoids under mtDNA replication stress caused by ddC and EtBr.</text>
</comment>
<comment type="alternative products">
    <event type="alternative splicing"/>
    <isoform>
        <id>Q6PIX9-1</id>
        <name>1</name>
        <sequence type="displayed"/>
    </isoform>
    <isoform>
        <id>Q6PIX9-2</id>
        <name>2</name>
        <sequence type="described" ref="VSP_024575"/>
    </isoform>
</comment>
<comment type="sequence caution" evidence="6">
    <conflict type="erroneous termination">
        <sequence resource="EMBL-CDS" id="BAB30780"/>
    </conflict>
    <text>Truncated C-terminus.</text>
</comment>
<evidence type="ECO:0000250" key="1">
    <source>
        <dbReference type="UniProtKB" id="Q9BSJ5"/>
    </source>
</evidence>
<evidence type="ECO:0000255" key="2"/>
<evidence type="ECO:0000256" key="3">
    <source>
        <dbReference type="SAM" id="MobiDB-lite"/>
    </source>
</evidence>
<evidence type="ECO:0000269" key="4">
    <source>
    </source>
</evidence>
<evidence type="ECO:0000303" key="5">
    <source>
    </source>
</evidence>
<evidence type="ECO:0000305" key="6"/>
<evidence type="ECO:0000312" key="7">
    <source>
        <dbReference type="MGI" id="MGI:106356"/>
    </source>
</evidence>
<proteinExistence type="evidence at transcript level"/>
<protein>
    <recommendedName>
        <fullName>Mitochondrial nucleoid-associated protein 1</fullName>
    </recommendedName>
</protein>
<dbReference type="EMBL" id="AK017508">
    <property type="protein sequence ID" value="BAB30780.1"/>
    <property type="status" value="ALT_SEQ"/>
    <property type="molecule type" value="mRNA"/>
</dbReference>
<dbReference type="EMBL" id="AK139389">
    <property type="protein sequence ID" value="BAE23989.1"/>
    <property type="molecule type" value="mRNA"/>
</dbReference>
<dbReference type="EMBL" id="AK171307">
    <property type="protein sequence ID" value="BAE42383.1"/>
    <property type="molecule type" value="mRNA"/>
</dbReference>
<dbReference type="EMBL" id="AL603706">
    <property type="status" value="NOT_ANNOTATED_CDS"/>
    <property type="molecule type" value="Genomic_DNA"/>
</dbReference>
<dbReference type="EMBL" id="BC026908">
    <property type="protein sequence ID" value="AAH26908.2"/>
    <property type="molecule type" value="mRNA"/>
</dbReference>
<dbReference type="EMBL" id="BC048942">
    <property type="protein sequence ID" value="AAH48942.1"/>
    <property type="molecule type" value="mRNA"/>
</dbReference>
<dbReference type="CCDS" id="CCDS48976.1">
    <molecule id="Q6PIX9-1"/>
</dbReference>
<dbReference type="RefSeq" id="NP_001348522.1">
    <molecule id="Q6PIX9-1"/>
    <property type="nucleotide sequence ID" value="NM_001361593.1"/>
</dbReference>
<dbReference type="RefSeq" id="NP_808445.2">
    <molecule id="Q6PIX9-1"/>
    <property type="nucleotide sequence ID" value="NM_177777.5"/>
</dbReference>
<dbReference type="RefSeq" id="XP_006533536.1">
    <property type="nucleotide sequence ID" value="XM_006533473.2"/>
</dbReference>
<dbReference type="RefSeq" id="XP_011247361.1">
    <molecule id="Q6PIX9-1"/>
    <property type="nucleotide sequence ID" value="XM_011249059.4"/>
</dbReference>
<dbReference type="RefSeq" id="XP_017170063.1">
    <molecule id="Q6PIX9-2"/>
    <property type="nucleotide sequence ID" value="XM_017314574.3"/>
</dbReference>
<dbReference type="RefSeq" id="XP_017170064.1">
    <molecule id="Q6PIX9-2"/>
    <property type="nucleotide sequence ID" value="XM_017314575.3"/>
</dbReference>
<dbReference type="RefSeq" id="XP_017170065.1">
    <molecule id="Q6PIX9-2"/>
    <property type="nucleotide sequence ID" value="XM_017314576.3"/>
</dbReference>
<dbReference type="FunCoup" id="Q6PIX9">
    <property type="interactions" value="1549"/>
</dbReference>
<dbReference type="STRING" id="10090.ENSMUSP00000042025"/>
<dbReference type="GlyGen" id="Q6PIX9">
    <property type="glycosylation" value="1 site"/>
</dbReference>
<dbReference type="iPTMnet" id="Q6PIX9"/>
<dbReference type="PhosphoSitePlus" id="Q6PIX9"/>
<dbReference type="SwissPalm" id="Q6PIX9"/>
<dbReference type="PaxDb" id="10090-ENSMUSP00000042025"/>
<dbReference type="PeptideAtlas" id="Q6PIX9"/>
<dbReference type="ProteomicsDB" id="284163">
    <molecule id="Q6PIX9-1"/>
</dbReference>
<dbReference type="ProteomicsDB" id="284164">
    <molecule id="Q6PIX9-2"/>
</dbReference>
<dbReference type="Antibodypedia" id="2478">
    <property type="antibodies" value="76 antibodies from 17 providers"/>
</dbReference>
<dbReference type="Ensembl" id="ENSMUST00000042227.15">
    <molecule id="Q6PIX9-1"/>
    <property type="protein sequence ID" value="ENSMUSP00000042025.9"/>
    <property type="gene ID" value="ENSMUSG00000041623.18"/>
</dbReference>
<dbReference type="Ensembl" id="ENSMUST00000106621.4">
    <molecule id="Q6PIX9-1"/>
    <property type="protein sequence ID" value="ENSMUSP00000102232.4"/>
    <property type="gene ID" value="ENSMUSG00000041623.18"/>
</dbReference>
<dbReference type="GeneID" id="276852"/>
<dbReference type="KEGG" id="mmu:276852"/>
<dbReference type="UCSC" id="uc007mev.1">
    <molecule id="Q6PIX9-1"/>
    <property type="organism name" value="mouse"/>
</dbReference>
<dbReference type="AGR" id="MGI:106356"/>
<dbReference type="CTD" id="55028"/>
<dbReference type="MGI" id="MGI:106356">
    <property type="gene designation" value="Mtnap1"/>
</dbReference>
<dbReference type="VEuPathDB" id="HostDB:ENSMUSG00000041623"/>
<dbReference type="eggNOG" id="KOG4092">
    <property type="taxonomic scope" value="Eukaryota"/>
</dbReference>
<dbReference type="GeneTree" id="ENSGT00510000049019"/>
<dbReference type="HOGENOM" id="CLU_037702_0_0_1"/>
<dbReference type="InParanoid" id="Q6PIX9"/>
<dbReference type="OMA" id="VHTGWIR"/>
<dbReference type="OrthoDB" id="8921675at2759"/>
<dbReference type="PhylomeDB" id="Q6PIX9"/>
<dbReference type="TreeFam" id="TF324369"/>
<dbReference type="BioGRID-ORCS" id="276852">
    <property type="hits" value="3 hits in 77 CRISPR screens"/>
</dbReference>
<dbReference type="ChiTaRS" id="D11Wsu47e">
    <property type="organism name" value="mouse"/>
</dbReference>
<dbReference type="PRO" id="PR:Q6PIX9"/>
<dbReference type="Proteomes" id="UP000000589">
    <property type="component" value="Chromosome 11"/>
</dbReference>
<dbReference type="RNAct" id="Q6PIX9">
    <property type="molecule type" value="protein"/>
</dbReference>
<dbReference type="Bgee" id="ENSMUSG00000041623">
    <property type="expression patterns" value="Expressed in seminiferous tubule of testis and 168 other cell types or tissues"/>
</dbReference>
<dbReference type="ExpressionAtlas" id="Q6PIX9">
    <property type="expression patterns" value="baseline and differential"/>
</dbReference>
<dbReference type="GO" id="GO:0005743">
    <property type="term" value="C:mitochondrial inner membrane"/>
    <property type="evidence" value="ECO:0007669"/>
    <property type="project" value="UniProtKB-SubCell"/>
</dbReference>
<dbReference type="GO" id="GO:0042645">
    <property type="term" value="C:mitochondrial nucleoid"/>
    <property type="evidence" value="ECO:0000314"/>
    <property type="project" value="UniProtKB"/>
</dbReference>
<dbReference type="GO" id="GO:0008283">
    <property type="term" value="P:cell population proliferation"/>
    <property type="evidence" value="ECO:0000315"/>
    <property type="project" value="UniProtKB"/>
</dbReference>
<dbReference type="GO" id="GO:0032042">
    <property type="term" value="P:mitochondrial DNA metabolic process"/>
    <property type="evidence" value="ECO:0000315"/>
    <property type="project" value="UniProtKB"/>
</dbReference>
<dbReference type="GO" id="GO:0090297">
    <property type="term" value="P:positive regulation of mitochondrial DNA replication"/>
    <property type="evidence" value="ECO:0000315"/>
    <property type="project" value="UniProtKB"/>
</dbReference>
<dbReference type="InterPro" id="IPR037694">
    <property type="entry name" value="MTNAP1"/>
</dbReference>
<dbReference type="PANTHER" id="PTHR16270">
    <property type="entry name" value="HYPOTHETICAL LOC287798"/>
    <property type="match status" value="1"/>
</dbReference>
<dbReference type="PANTHER" id="PTHR16270:SF5">
    <property type="entry name" value="HYPOTHETICAL LOC287798"/>
    <property type="match status" value="1"/>
</dbReference>
<keyword id="KW-0025">Alternative splicing</keyword>
<keyword id="KW-0472">Membrane</keyword>
<keyword id="KW-0496">Mitochondrion</keyword>
<keyword id="KW-0999">Mitochondrion inner membrane</keyword>
<keyword id="KW-1135">Mitochondrion nucleoid</keyword>
<keyword id="KW-1185">Reference proteome</keyword>
<keyword id="KW-0812">Transmembrane</keyword>
<keyword id="KW-1133">Transmembrane helix</keyword>
<feature type="chain" id="PRO_0000284613" description="Mitochondrial nucleoid-associated protein 1">
    <location>
        <begin position="1"/>
        <end position="558"/>
    </location>
</feature>
<feature type="topological domain" description="Extracellular" evidence="1">
    <location>
        <begin position="1"/>
        <end position="527"/>
    </location>
</feature>
<feature type="transmembrane region" description="Helical" evidence="2">
    <location>
        <begin position="528"/>
        <end position="548"/>
    </location>
</feature>
<feature type="topological domain" description="Cytoplasmic" evidence="1">
    <location>
        <begin position="549"/>
        <end position="558"/>
    </location>
</feature>
<feature type="region of interest" description="Disordered" evidence="3">
    <location>
        <begin position="29"/>
        <end position="88"/>
    </location>
</feature>
<feature type="region of interest" description="Disordered" evidence="3">
    <location>
        <begin position="130"/>
        <end position="205"/>
    </location>
</feature>
<feature type="region of interest" description="Disordered" evidence="3">
    <location>
        <begin position="222"/>
        <end position="269"/>
    </location>
</feature>
<feature type="compositionally biased region" description="Polar residues" evidence="3">
    <location>
        <begin position="36"/>
        <end position="45"/>
    </location>
</feature>
<feature type="compositionally biased region" description="Basic and acidic residues" evidence="3">
    <location>
        <begin position="51"/>
        <end position="81"/>
    </location>
</feature>
<feature type="compositionally biased region" description="Polar residues" evidence="3">
    <location>
        <begin position="131"/>
        <end position="144"/>
    </location>
</feature>
<feature type="compositionally biased region" description="Polar residues" evidence="3">
    <location>
        <begin position="187"/>
        <end position="197"/>
    </location>
</feature>
<feature type="splice variant" id="VSP_024575" description="In isoform 2." evidence="5">
    <original>KLQHWRK</original>
    <variation>SLTEQRLASLHSQGGLSTSGPPASILNANRNQTLDAY</variation>
    <location>
        <begin position="552"/>
        <end position="558"/>
    </location>
</feature>
<feature type="sequence conflict" description="In Ref. 3; AAH26908." evidence="6" ref="3">
    <original>R</original>
    <variation>H</variation>
    <location>
        <position position="225"/>
    </location>
</feature>
<feature type="sequence conflict" description="In Ref. 3; AAH26908." evidence="6" ref="3">
    <original>G</original>
    <variation>D</variation>
    <location>
        <position position="253"/>
    </location>
</feature>
<feature type="sequence conflict" description="In Ref. 3; AAH26908." evidence="6" ref="3">
    <original>T</original>
    <variation>A</variation>
    <location>
        <position position="338"/>
    </location>
</feature>
<feature type="sequence conflict" description="In Ref. 3; AAH26908." evidence="6" ref="3">
    <original>I</original>
    <variation>V</variation>
    <location>
        <position position="379"/>
    </location>
</feature>
<feature type="sequence conflict" description="In Ref. 3; AAH26908." evidence="6" ref="3">
    <original>G</original>
    <variation>E</variation>
    <location>
        <position position="384"/>
    </location>
</feature>
<feature type="sequence conflict" description="In Ref. 3; AAH26908." evidence="6" ref="3">
    <original>T</original>
    <variation>A</variation>
    <location>
        <position position="498"/>
    </location>
</feature>
<feature type="sequence conflict" description="In Ref. 3; AAH26908." evidence="6" ref="3">
    <original>H</original>
    <variation>R</variation>
    <location>
        <position position="555"/>
    </location>
</feature>
<reference key="1">
    <citation type="journal article" date="2005" name="Science">
        <title>The transcriptional landscape of the mammalian genome.</title>
        <authorList>
            <person name="Carninci P."/>
            <person name="Kasukawa T."/>
            <person name="Katayama S."/>
            <person name="Gough J."/>
            <person name="Frith M.C."/>
            <person name="Maeda N."/>
            <person name="Oyama R."/>
            <person name="Ravasi T."/>
            <person name="Lenhard B."/>
            <person name="Wells C."/>
            <person name="Kodzius R."/>
            <person name="Shimokawa K."/>
            <person name="Bajic V.B."/>
            <person name="Brenner S.E."/>
            <person name="Batalov S."/>
            <person name="Forrest A.R."/>
            <person name="Zavolan M."/>
            <person name="Davis M.J."/>
            <person name="Wilming L.G."/>
            <person name="Aidinis V."/>
            <person name="Allen J.E."/>
            <person name="Ambesi-Impiombato A."/>
            <person name="Apweiler R."/>
            <person name="Aturaliya R.N."/>
            <person name="Bailey T.L."/>
            <person name="Bansal M."/>
            <person name="Baxter L."/>
            <person name="Beisel K.W."/>
            <person name="Bersano T."/>
            <person name="Bono H."/>
            <person name="Chalk A.M."/>
            <person name="Chiu K.P."/>
            <person name="Choudhary V."/>
            <person name="Christoffels A."/>
            <person name="Clutterbuck D.R."/>
            <person name="Crowe M.L."/>
            <person name="Dalla E."/>
            <person name="Dalrymple B.P."/>
            <person name="de Bono B."/>
            <person name="Della Gatta G."/>
            <person name="di Bernardo D."/>
            <person name="Down T."/>
            <person name="Engstrom P."/>
            <person name="Fagiolini M."/>
            <person name="Faulkner G."/>
            <person name="Fletcher C.F."/>
            <person name="Fukushima T."/>
            <person name="Furuno M."/>
            <person name="Futaki S."/>
            <person name="Gariboldi M."/>
            <person name="Georgii-Hemming P."/>
            <person name="Gingeras T.R."/>
            <person name="Gojobori T."/>
            <person name="Green R.E."/>
            <person name="Gustincich S."/>
            <person name="Harbers M."/>
            <person name="Hayashi Y."/>
            <person name="Hensch T.K."/>
            <person name="Hirokawa N."/>
            <person name="Hill D."/>
            <person name="Huminiecki L."/>
            <person name="Iacono M."/>
            <person name="Ikeo K."/>
            <person name="Iwama A."/>
            <person name="Ishikawa T."/>
            <person name="Jakt M."/>
            <person name="Kanapin A."/>
            <person name="Katoh M."/>
            <person name="Kawasawa Y."/>
            <person name="Kelso J."/>
            <person name="Kitamura H."/>
            <person name="Kitano H."/>
            <person name="Kollias G."/>
            <person name="Krishnan S.P."/>
            <person name="Kruger A."/>
            <person name="Kummerfeld S.K."/>
            <person name="Kurochkin I.V."/>
            <person name="Lareau L.F."/>
            <person name="Lazarevic D."/>
            <person name="Lipovich L."/>
            <person name="Liu J."/>
            <person name="Liuni S."/>
            <person name="McWilliam S."/>
            <person name="Madan Babu M."/>
            <person name="Madera M."/>
            <person name="Marchionni L."/>
            <person name="Matsuda H."/>
            <person name="Matsuzawa S."/>
            <person name="Miki H."/>
            <person name="Mignone F."/>
            <person name="Miyake S."/>
            <person name="Morris K."/>
            <person name="Mottagui-Tabar S."/>
            <person name="Mulder N."/>
            <person name="Nakano N."/>
            <person name="Nakauchi H."/>
            <person name="Ng P."/>
            <person name="Nilsson R."/>
            <person name="Nishiguchi S."/>
            <person name="Nishikawa S."/>
            <person name="Nori F."/>
            <person name="Ohara O."/>
            <person name="Okazaki Y."/>
            <person name="Orlando V."/>
            <person name="Pang K.C."/>
            <person name="Pavan W.J."/>
            <person name="Pavesi G."/>
            <person name="Pesole G."/>
            <person name="Petrovsky N."/>
            <person name="Piazza S."/>
            <person name="Reed J."/>
            <person name="Reid J.F."/>
            <person name="Ring B.Z."/>
            <person name="Ringwald M."/>
            <person name="Rost B."/>
            <person name="Ruan Y."/>
            <person name="Salzberg S.L."/>
            <person name="Sandelin A."/>
            <person name="Schneider C."/>
            <person name="Schoenbach C."/>
            <person name="Sekiguchi K."/>
            <person name="Semple C.A."/>
            <person name="Seno S."/>
            <person name="Sessa L."/>
            <person name="Sheng Y."/>
            <person name="Shibata Y."/>
            <person name="Shimada H."/>
            <person name="Shimada K."/>
            <person name="Silva D."/>
            <person name="Sinclair B."/>
            <person name="Sperling S."/>
            <person name="Stupka E."/>
            <person name="Sugiura K."/>
            <person name="Sultana R."/>
            <person name="Takenaka Y."/>
            <person name="Taki K."/>
            <person name="Tammoja K."/>
            <person name="Tan S.L."/>
            <person name="Tang S."/>
            <person name="Taylor M.S."/>
            <person name="Tegner J."/>
            <person name="Teichmann S.A."/>
            <person name="Ueda H.R."/>
            <person name="van Nimwegen E."/>
            <person name="Verardo R."/>
            <person name="Wei C.L."/>
            <person name="Yagi K."/>
            <person name="Yamanishi H."/>
            <person name="Zabarovsky E."/>
            <person name="Zhu S."/>
            <person name="Zimmer A."/>
            <person name="Hide W."/>
            <person name="Bult C."/>
            <person name="Grimmond S.M."/>
            <person name="Teasdale R.D."/>
            <person name="Liu E.T."/>
            <person name="Brusic V."/>
            <person name="Quackenbush J."/>
            <person name="Wahlestedt C."/>
            <person name="Mattick J.S."/>
            <person name="Hume D.A."/>
            <person name="Kai C."/>
            <person name="Sasaki D."/>
            <person name="Tomaru Y."/>
            <person name="Fukuda S."/>
            <person name="Kanamori-Katayama M."/>
            <person name="Suzuki M."/>
            <person name="Aoki J."/>
            <person name="Arakawa T."/>
            <person name="Iida J."/>
            <person name="Imamura K."/>
            <person name="Itoh M."/>
            <person name="Kato T."/>
            <person name="Kawaji H."/>
            <person name="Kawagashira N."/>
            <person name="Kawashima T."/>
            <person name="Kojima M."/>
            <person name="Kondo S."/>
            <person name="Konno H."/>
            <person name="Nakano K."/>
            <person name="Ninomiya N."/>
            <person name="Nishio T."/>
            <person name="Okada M."/>
            <person name="Plessy C."/>
            <person name="Shibata K."/>
            <person name="Shiraki T."/>
            <person name="Suzuki S."/>
            <person name="Tagami M."/>
            <person name="Waki K."/>
            <person name="Watahiki A."/>
            <person name="Okamura-Oho Y."/>
            <person name="Suzuki H."/>
            <person name="Kawai J."/>
            <person name="Hayashizaki Y."/>
        </authorList>
    </citation>
    <scope>NUCLEOTIDE SEQUENCE [LARGE SCALE MRNA] (ISOFORMS 1 AND 2)</scope>
    <source>
        <strain>C57BL/6J</strain>
        <strain>NOD</strain>
        <tissue>Brain cortex</tissue>
        <tissue>Embryo</tissue>
    </source>
</reference>
<reference key="2">
    <citation type="journal article" date="2009" name="PLoS Biol.">
        <title>Lineage-specific biology revealed by a finished genome assembly of the mouse.</title>
        <authorList>
            <person name="Church D.M."/>
            <person name="Goodstadt L."/>
            <person name="Hillier L.W."/>
            <person name="Zody M.C."/>
            <person name="Goldstein S."/>
            <person name="She X."/>
            <person name="Bult C.J."/>
            <person name="Agarwala R."/>
            <person name="Cherry J.L."/>
            <person name="DiCuccio M."/>
            <person name="Hlavina W."/>
            <person name="Kapustin Y."/>
            <person name="Meric P."/>
            <person name="Maglott D."/>
            <person name="Birtle Z."/>
            <person name="Marques A.C."/>
            <person name="Graves T."/>
            <person name="Zhou S."/>
            <person name="Teague B."/>
            <person name="Potamousis K."/>
            <person name="Churas C."/>
            <person name="Place M."/>
            <person name="Herschleb J."/>
            <person name="Runnheim R."/>
            <person name="Forrest D."/>
            <person name="Amos-Landgraf J."/>
            <person name="Schwartz D.C."/>
            <person name="Cheng Z."/>
            <person name="Lindblad-Toh K."/>
            <person name="Eichler E.E."/>
            <person name="Ponting C.P."/>
        </authorList>
    </citation>
    <scope>NUCLEOTIDE SEQUENCE [LARGE SCALE GENOMIC DNA]</scope>
    <source>
        <strain>C57BL/6J</strain>
    </source>
</reference>
<reference key="3">
    <citation type="journal article" date="2004" name="Genome Res.">
        <title>The status, quality, and expansion of the NIH full-length cDNA project: the Mammalian Gene Collection (MGC).</title>
        <authorList>
            <consortium name="The MGC Project Team"/>
        </authorList>
    </citation>
    <scope>NUCLEOTIDE SEQUENCE [LARGE SCALE MRNA] (ISOFORM 1)</scope>
    <source>
        <strain>Czech II</strain>
        <strain>FVB/N-3</strain>
        <tissue>Mammary tumor</tissue>
    </source>
</reference>
<reference key="4">
    <citation type="journal article" date="2023" name="J. Cell Biol.">
        <title>C17orf80 binds the mitochondrial genome to promote its replication.</title>
        <authorList>
            <person name="Wu H."/>
            <person name="Zhang W."/>
            <person name="Xu F."/>
            <person name="Peng K."/>
            <person name="Liu X."/>
            <person name="Ding W."/>
            <person name="Ma Q."/>
            <person name="Cheng H."/>
            <person name="Wang X."/>
        </authorList>
    </citation>
    <scope>FUNCTION</scope>
    <scope>SUBCELLULAR LOCATION</scope>
</reference>
<name>CQ080_MOUSE</name>
<accession>Q6PIX9</accession>
<accession>Q3UTJ1</accession>
<accession>Q80UV5</accession>
<accession>Q9CYN0</accession>
<gene>
    <name evidence="1" type="primary">Mtnap1</name>
    <name type="synonym">D11Wsu47e</name>
    <name evidence="7" type="synonym">Gm57859</name>
</gene>
<organism>
    <name type="scientific">Mus musculus</name>
    <name type="common">Mouse</name>
    <dbReference type="NCBI Taxonomy" id="10090"/>
    <lineage>
        <taxon>Eukaryota</taxon>
        <taxon>Metazoa</taxon>
        <taxon>Chordata</taxon>
        <taxon>Craniata</taxon>
        <taxon>Vertebrata</taxon>
        <taxon>Euteleostomi</taxon>
        <taxon>Mammalia</taxon>
        <taxon>Eutheria</taxon>
        <taxon>Euarchontoglires</taxon>
        <taxon>Glires</taxon>
        <taxon>Rodentia</taxon>
        <taxon>Myomorpha</taxon>
        <taxon>Muroidea</taxon>
        <taxon>Muridae</taxon>
        <taxon>Murinae</taxon>
        <taxon>Mus</taxon>
        <taxon>Mus</taxon>
    </lineage>
</organism>
<sequence length="558" mass="60276">MGAAEPRMEVCPYCKKPFKRLKSHLPHCKMRGPSISADQNVSQSKPAALAQKEKSPTRDLTRAKEKELEVDRPKRAVKAETSRASWTAAASPLPEGILGSVRITKAEGENKDQNQFSFQALSQAKPEVTLQRVTTPWSPASDATSPKRELTQDVSESKGSPCPSETEAPSLVSSVEPFLANQDRKYSSTQPHANPATSVGLKLGTVDPQRQKLRVKLLDVPLSDRHSPKSGSHGVQRVTPSVLSREEGSQDGGHLLGVSAHPGNTKTQKSESLLLGLHTGLLGKAPVREHQELGLGMELSQSKGNTENRMSVTNVQEGAGLGQGGKDPITATKAKPHTALELRNVFMPESGNQSLTSPAVTSTPEENAQFCGQSHVPAITLSVGSVRDVLEPTSFYQPHTAQAGHCLMSYSAQYPVPKTFVGHVAAVTSGAPPRSVGLEWFPELYPAYVGLGVLPRRPPPWSLAAQVPPLPTLQGRSVSKVPWWGRSSADSRSLEPLTLTTSSLPLMRLLGAVHKGWVQCNTTIKKSGVGGLTMLFAGYFILCCNWSFKHLKLQHWRK</sequence>